<name>RL20_SYNPW</name>
<reference key="1">
    <citation type="submission" date="2006-05" db="EMBL/GenBank/DDBJ databases">
        <authorList>
            <consortium name="Genoscope"/>
        </authorList>
    </citation>
    <scope>NUCLEOTIDE SEQUENCE [LARGE SCALE GENOMIC DNA]</scope>
    <source>
        <strain>WH7803</strain>
    </source>
</reference>
<accession>A5GHR9</accession>
<proteinExistence type="inferred from homology"/>
<comment type="function">
    <text evidence="1">Binds directly to 23S ribosomal RNA and is necessary for the in vitro assembly process of the 50S ribosomal subunit. It is not involved in the protein synthesizing functions of that subunit.</text>
</comment>
<comment type="similarity">
    <text evidence="1">Belongs to the bacterial ribosomal protein bL20 family.</text>
</comment>
<organism>
    <name type="scientific">Synechococcus sp. (strain WH7803)</name>
    <dbReference type="NCBI Taxonomy" id="32051"/>
    <lineage>
        <taxon>Bacteria</taxon>
        <taxon>Bacillati</taxon>
        <taxon>Cyanobacteriota</taxon>
        <taxon>Cyanophyceae</taxon>
        <taxon>Synechococcales</taxon>
        <taxon>Synechococcaceae</taxon>
        <taxon>Synechococcus</taxon>
    </lineage>
</organism>
<sequence>MARVKRGNVARKRRNKILRLARGFRGSNGTLFRTANQRVMKALCNAYRDRRRRKRDFRRLWIARINAAARLNGVSYSRLIGGLKQADVRINRKMLAQLAVADPSSFTTVVNATQG</sequence>
<keyword id="KW-1185">Reference proteome</keyword>
<keyword id="KW-0687">Ribonucleoprotein</keyword>
<keyword id="KW-0689">Ribosomal protein</keyword>
<keyword id="KW-0694">RNA-binding</keyword>
<keyword id="KW-0699">rRNA-binding</keyword>
<protein>
    <recommendedName>
        <fullName evidence="1">Large ribosomal subunit protein bL20</fullName>
    </recommendedName>
    <alternativeName>
        <fullName evidence="2">50S ribosomal protein L20</fullName>
    </alternativeName>
</protein>
<gene>
    <name evidence="1" type="primary">rplT</name>
    <name evidence="1" type="synonym">rpl20</name>
    <name type="ordered locus">SynWH7803_0058</name>
</gene>
<dbReference type="EMBL" id="CT971583">
    <property type="protein sequence ID" value="CAK22484.1"/>
    <property type="molecule type" value="Genomic_DNA"/>
</dbReference>
<dbReference type="SMR" id="A5GHR9"/>
<dbReference type="STRING" id="32051.SynWH7803_0058"/>
<dbReference type="KEGG" id="syx:SynWH7803_0058"/>
<dbReference type="eggNOG" id="COG0292">
    <property type="taxonomic scope" value="Bacteria"/>
</dbReference>
<dbReference type="HOGENOM" id="CLU_123265_0_1_3"/>
<dbReference type="OrthoDB" id="9808966at2"/>
<dbReference type="Proteomes" id="UP000001566">
    <property type="component" value="Chromosome"/>
</dbReference>
<dbReference type="GO" id="GO:1990904">
    <property type="term" value="C:ribonucleoprotein complex"/>
    <property type="evidence" value="ECO:0007669"/>
    <property type="project" value="UniProtKB-KW"/>
</dbReference>
<dbReference type="GO" id="GO:0005840">
    <property type="term" value="C:ribosome"/>
    <property type="evidence" value="ECO:0007669"/>
    <property type="project" value="UniProtKB-KW"/>
</dbReference>
<dbReference type="GO" id="GO:0019843">
    <property type="term" value="F:rRNA binding"/>
    <property type="evidence" value="ECO:0007669"/>
    <property type="project" value="UniProtKB-UniRule"/>
</dbReference>
<dbReference type="GO" id="GO:0003735">
    <property type="term" value="F:structural constituent of ribosome"/>
    <property type="evidence" value="ECO:0007669"/>
    <property type="project" value="InterPro"/>
</dbReference>
<dbReference type="GO" id="GO:0000027">
    <property type="term" value="P:ribosomal large subunit assembly"/>
    <property type="evidence" value="ECO:0007669"/>
    <property type="project" value="UniProtKB-UniRule"/>
</dbReference>
<dbReference type="GO" id="GO:0006412">
    <property type="term" value="P:translation"/>
    <property type="evidence" value="ECO:0007669"/>
    <property type="project" value="InterPro"/>
</dbReference>
<dbReference type="CDD" id="cd07026">
    <property type="entry name" value="Ribosomal_L20"/>
    <property type="match status" value="1"/>
</dbReference>
<dbReference type="FunFam" id="1.10.1900.20:FF:000001">
    <property type="entry name" value="50S ribosomal protein L20"/>
    <property type="match status" value="1"/>
</dbReference>
<dbReference type="Gene3D" id="6.10.160.10">
    <property type="match status" value="1"/>
</dbReference>
<dbReference type="Gene3D" id="1.10.1900.20">
    <property type="entry name" value="Ribosomal protein L20"/>
    <property type="match status" value="1"/>
</dbReference>
<dbReference type="HAMAP" id="MF_00382">
    <property type="entry name" value="Ribosomal_bL20"/>
    <property type="match status" value="1"/>
</dbReference>
<dbReference type="InterPro" id="IPR005813">
    <property type="entry name" value="Ribosomal_bL20"/>
</dbReference>
<dbReference type="InterPro" id="IPR049946">
    <property type="entry name" value="RIBOSOMAL_L20_CS"/>
</dbReference>
<dbReference type="InterPro" id="IPR035566">
    <property type="entry name" value="Ribosomal_protein_bL20_C"/>
</dbReference>
<dbReference type="NCBIfam" id="TIGR01032">
    <property type="entry name" value="rplT_bact"/>
    <property type="match status" value="1"/>
</dbReference>
<dbReference type="PANTHER" id="PTHR10986">
    <property type="entry name" value="39S RIBOSOMAL PROTEIN L20"/>
    <property type="match status" value="1"/>
</dbReference>
<dbReference type="Pfam" id="PF00453">
    <property type="entry name" value="Ribosomal_L20"/>
    <property type="match status" value="1"/>
</dbReference>
<dbReference type="PRINTS" id="PR00062">
    <property type="entry name" value="RIBOSOMALL20"/>
</dbReference>
<dbReference type="SUPFAM" id="SSF74731">
    <property type="entry name" value="Ribosomal protein L20"/>
    <property type="match status" value="1"/>
</dbReference>
<dbReference type="PROSITE" id="PS00937">
    <property type="entry name" value="RIBOSOMAL_L20"/>
    <property type="match status" value="1"/>
</dbReference>
<feature type="chain" id="PRO_1000049092" description="Large ribosomal subunit protein bL20">
    <location>
        <begin position="1"/>
        <end position="115"/>
    </location>
</feature>
<evidence type="ECO:0000255" key="1">
    <source>
        <dbReference type="HAMAP-Rule" id="MF_00382"/>
    </source>
</evidence>
<evidence type="ECO:0000305" key="2"/>